<name>MNHG1_STAHJ</name>
<evidence type="ECO:0000250" key="1"/>
<evidence type="ECO:0000255" key="2"/>
<evidence type="ECO:0000305" key="3"/>
<feature type="chain" id="PRO_0000372171" description="Na(+)/H(+) antiporter subunit G1">
    <location>
        <begin position="1"/>
        <end position="118"/>
    </location>
</feature>
<feature type="transmembrane region" description="Helical" evidence="2">
    <location>
        <begin position="9"/>
        <end position="29"/>
    </location>
</feature>
<feature type="transmembrane region" description="Helical" evidence="2">
    <location>
        <begin position="47"/>
        <end position="67"/>
    </location>
</feature>
<feature type="transmembrane region" description="Helical" evidence="2">
    <location>
        <begin position="69"/>
        <end position="89"/>
    </location>
</feature>
<reference key="1">
    <citation type="journal article" date="2005" name="J. Bacteriol.">
        <title>Whole-genome sequencing of Staphylococcus haemolyticus uncovers the extreme plasticity of its genome and the evolution of human-colonizing staphylococcal species.</title>
        <authorList>
            <person name="Takeuchi F."/>
            <person name="Watanabe S."/>
            <person name="Baba T."/>
            <person name="Yuzawa H."/>
            <person name="Ito T."/>
            <person name="Morimoto Y."/>
            <person name="Kuroda M."/>
            <person name="Cui L."/>
            <person name="Takahashi M."/>
            <person name="Ankai A."/>
            <person name="Baba S."/>
            <person name="Fukui S."/>
            <person name="Lee J.C."/>
            <person name="Hiramatsu K."/>
        </authorList>
    </citation>
    <scope>NUCLEOTIDE SEQUENCE [LARGE SCALE GENOMIC DNA]</scope>
    <source>
        <strain>JCSC1435</strain>
    </source>
</reference>
<gene>
    <name type="primary">mnhG1</name>
    <name type="ordered locus">SH2005</name>
</gene>
<accession>Q4L4W1</accession>
<organism>
    <name type="scientific">Staphylococcus haemolyticus (strain JCSC1435)</name>
    <dbReference type="NCBI Taxonomy" id="279808"/>
    <lineage>
        <taxon>Bacteria</taxon>
        <taxon>Bacillati</taxon>
        <taxon>Bacillota</taxon>
        <taxon>Bacilli</taxon>
        <taxon>Bacillales</taxon>
        <taxon>Staphylococcaceae</taxon>
        <taxon>Staphylococcus</taxon>
    </lineage>
</organism>
<keyword id="KW-0050">Antiport</keyword>
<keyword id="KW-1003">Cell membrane</keyword>
<keyword id="KW-0375">Hydrogen ion transport</keyword>
<keyword id="KW-0406">Ion transport</keyword>
<keyword id="KW-0472">Membrane</keyword>
<keyword id="KW-0915">Sodium</keyword>
<keyword id="KW-0739">Sodium transport</keyword>
<keyword id="KW-0812">Transmembrane</keyword>
<keyword id="KW-1133">Transmembrane helix</keyword>
<keyword id="KW-0813">Transport</keyword>
<sequence>MITNIIISLAVIFVILGAIISAVTAIGIIRLKDIYSRGHAAGKSATLGAIFLLFGTFLYFIATDGYINMQLIFGILFILITGPLSSHLIMRAAYNNKTPYTKDTKIDELKNEFKDKMI</sequence>
<protein>
    <recommendedName>
        <fullName>Na(+)/H(+) antiporter subunit G1</fullName>
    </recommendedName>
    <alternativeName>
        <fullName>Mnh complex subunit G1</fullName>
    </alternativeName>
</protein>
<comment type="function">
    <text evidence="1">Mnh complex is a Na(+)/H(+) antiporter involved in Na(+) excretion.</text>
</comment>
<comment type="subunit">
    <text evidence="1">May form a heterooligomeric complex that consists of seven subunits: mnhA1, mnhB1, mnhC1, mnhD1, mnhE1, mnhF1 and mnhG1.</text>
</comment>
<comment type="subcellular location">
    <subcellularLocation>
        <location evidence="3">Cell membrane</location>
        <topology evidence="3">Multi-pass membrane protein</topology>
    </subcellularLocation>
</comment>
<comment type="similarity">
    <text evidence="3">Belongs to the CPA3 antiporters (TC 2.A.63) subunit G family.</text>
</comment>
<dbReference type="EMBL" id="AP006716">
    <property type="protein sequence ID" value="BAE05314.1"/>
    <property type="molecule type" value="Genomic_DNA"/>
</dbReference>
<dbReference type="RefSeq" id="WP_011276272.1">
    <property type="nucleotide sequence ID" value="NC_007168.1"/>
</dbReference>
<dbReference type="SMR" id="Q4L4W1"/>
<dbReference type="KEGG" id="sha:SH2005"/>
<dbReference type="eggNOG" id="COG1320">
    <property type="taxonomic scope" value="Bacteria"/>
</dbReference>
<dbReference type="HOGENOM" id="CLU_121334_0_3_9"/>
<dbReference type="OrthoDB" id="9806575at2"/>
<dbReference type="Proteomes" id="UP000000543">
    <property type="component" value="Chromosome"/>
</dbReference>
<dbReference type="GO" id="GO:0005886">
    <property type="term" value="C:plasma membrane"/>
    <property type="evidence" value="ECO:0007669"/>
    <property type="project" value="UniProtKB-SubCell"/>
</dbReference>
<dbReference type="GO" id="GO:0015385">
    <property type="term" value="F:sodium:proton antiporter activity"/>
    <property type="evidence" value="ECO:0007669"/>
    <property type="project" value="TreeGrafter"/>
</dbReference>
<dbReference type="InterPro" id="IPR005133">
    <property type="entry name" value="PhaG_MnhG_YufB"/>
</dbReference>
<dbReference type="NCBIfam" id="TIGR01300">
    <property type="entry name" value="CPA3_mnhG_phaG"/>
    <property type="match status" value="1"/>
</dbReference>
<dbReference type="NCBIfam" id="NF009237">
    <property type="entry name" value="PRK12587.1"/>
    <property type="match status" value="1"/>
</dbReference>
<dbReference type="NCBIfam" id="NF009314">
    <property type="entry name" value="PRK12674.1-2"/>
    <property type="match status" value="1"/>
</dbReference>
<dbReference type="PANTHER" id="PTHR34703">
    <property type="entry name" value="ANTIPORTER SUBUNIT MNHG2-RELATED"/>
    <property type="match status" value="1"/>
</dbReference>
<dbReference type="PANTHER" id="PTHR34703:SF1">
    <property type="entry name" value="ANTIPORTER SUBUNIT MNHG2-RELATED"/>
    <property type="match status" value="1"/>
</dbReference>
<dbReference type="Pfam" id="PF03334">
    <property type="entry name" value="PhaG_MnhG_YufB"/>
    <property type="match status" value="1"/>
</dbReference>
<proteinExistence type="inferred from homology"/>